<evidence type="ECO:0000255" key="1">
    <source>
        <dbReference type="HAMAP-Rule" id="MF_00115"/>
    </source>
</evidence>
<keyword id="KW-1003">Cell membrane</keyword>
<keyword id="KW-0407">Ion channel</keyword>
<keyword id="KW-0406">Ion transport</keyword>
<keyword id="KW-0472">Membrane</keyword>
<keyword id="KW-0812">Transmembrane</keyword>
<keyword id="KW-1133">Transmembrane helix</keyword>
<keyword id="KW-0813">Transport</keyword>
<dbReference type="EMBL" id="CP001638">
    <property type="protein sequence ID" value="ACS24136.1"/>
    <property type="molecule type" value="Genomic_DNA"/>
</dbReference>
<dbReference type="SMR" id="C5DA22"/>
<dbReference type="STRING" id="471223.GWCH70_1285"/>
<dbReference type="KEGG" id="gwc:GWCH70_1285"/>
<dbReference type="eggNOG" id="COG1970">
    <property type="taxonomic scope" value="Bacteria"/>
</dbReference>
<dbReference type="HOGENOM" id="CLU_095787_0_0_9"/>
<dbReference type="OrthoDB" id="9810350at2"/>
<dbReference type="GO" id="GO:0005886">
    <property type="term" value="C:plasma membrane"/>
    <property type="evidence" value="ECO:0007669"/>
    <property type="project" value="UniProtKB-SubCell"/>
</dbReference>
<dbReference type="GO" id="GO:0008381">
    <property type="term" value="F:mechanosensitive monoatomic ion channel activity"/>
    <property type="evidence" value="ECO:0007669"/>
    <property type="project" value="UniProtKB-UniRule"/>
</dbReference>
<dbReference type="FunFam" id="1.10.1200.120:FF:000001">
    <property type="entry name" value="Large-conductance mechanosensitive channel"/>
    <property type="match status" value="1"/>
</dbReference>
<dbReference type="Gene3D" id="1.10.1200.120">
    <property type="entry name" value="Large-conductance mechanosensitive channel, MscL, domain 1"/>
    <property type="match status" value="1"/>
</dbReference>
<dbReference type="HAMAP" id="MF_00115">
    <property type="entry name" value="MscL"/>
    <property type="match status" value="1"/>
</dbReference>
<dbReference type="InterPro" id="IPR019823">
    <property type="entry name" value="Mechanosensitive_channel_CS"/>
</dbReference>
<dbReference type="InterPro" id="IPR001185">
    <property type="entry name" value="MS_channel"/>
</dbReference>
<dbReference type="InterPro" id="IPR037673">
    <property type="entry name" value="MSC/AndL"/>
</dbReference>
<dbReference type="InterPro" id="IPR036019">
    <property type="entry name" value="MscL_channel"/>
</dbReference>
<dbReference type="NCBIfam" id="TIGR00220">
    <property type="entry name" value="mscL"/>
    <property type="match status" value="1"/>
</dbReference>
<dbReference type="NCBIfam" id="NF001843">
    <property type="entry name" value="PRK00567.1-4"/>
    <property type="match status" value="1"/>
</dbReference>
<dbReference type="NCBIfam" id="NF010558">
    <property type="entry name" value="PRK13953.1"/>
    <property type="match status" value="1"/>
</dbReference>
<dbReference type="NCBIfam" id="NF010560">
    <property type="entry name" value="PRK13955.1"/>
    <property type="match status" value="1"/>
</dbReference>
<dbReference type="PANTHER" id="PTHR30266:SF2">
    <property type="entry name" value="LARGE-CONDUCTANCE MECHANOSENSITIVE CHANNEL"/>
    <property type="match status" value="1"/>
</dbReference>
<dbReference type="PANTHER" id="PTHR30266">
    <property type="entry name" value="MECHANOSENSITIVE CHANNEL MSCL"/>
    <property type="match status" value="1"/>
</dbReference>
<dbReference type="Pfam" id="PF01741">
    <property type="entry name" value="MscL"/>
    <property type="match status" value="1"/>
</dbReference>
<dbReference type="PRINTS" id="PR01264">
    <property type="entry name" value="MECHCHANNEL"/>
</dbReference>
<dbReference type="SUPFAM" id="SSF81330">
    <property type="entry name" value="Gated mechanosensitive channel"/>
    <property type="match status" value="1"/>
</dbReference>
<dbReference type="PROSITE" id="PS01327">
    <property type="entry name" value="MSCL"/>
    <property type="match status" value="1"/>
</dbReference>
<feature type="chain" id="PRO_1000202975" description="Large-conductance mechanosensitive channel">
    <location>
        <begin position="1"/>
        <end position="131"/>
    </location>
</feature>
<feature type="transmembrane region" description="Helical" evidence="1">
    <location>
        <begin position="8"/>
        <end position="28"/>
    </location>
</feature>
<feature type="transmembrane region" description="Helical" evidence="1">
    <location>
        <begin position="30"/>
        <end position="50"/>
    </location>
</feature>
<feature type="transmembrane region" description="Helical" evidence="1">
    <location>
        <begin position="67"/>
        <end position="87"/>
    </location>
</feature>
<sequence>MWKEFKEFAMRGNVVDLAVGVIIGGAFGKIVSSLVNDILMPLVGLLLGGVDFSGLSWKFGKAVVKYGMFIQTVVDFFIISFSIFVFVKVLNKLYWHNKKEEEIKDTAPTLTKEEELLMEIRDLLKQQRETR</sequence>
<comment type="function">
    <text evidence="1">Channel that opens in response to stretch forces in the membrane lipid bilayer. May participate in the regulation of osmotic pressure changes within the cell.</text>
</comment>
<comment type="subunit">
    <text evidence="1">Homopentamer.</text>
</comment>
<comment type="subcellular location">
    <subcellularLocation>
        <location evidence="1">Cell membrane</location>
        <topology evidence="1">Multi-pass membrane protein</topology>
    </subcellularLocation>
</comment>
<comment type="similarity">
    <text evidence="1">Belongs to the MscL family.</text>
</comment>
<protein>
    <recommendedName>
        <fullName evidence="1">Large-conductance mechanosensitive channel</fullName>
    </recommendedName>
</protein>
<reference key="1">
    <citation type="submission" date="2009-06" db="EMBL/GenBank/DDBJ databases">
        <title>Complete sequence of chromosome of Geopacillus sp. WCH70.</title>
        <authorList>
            <consortium name="US DOE Joint Genome Institute"/>
            <person name="Lucas S."/>
            <person name="Copeland A."/>
            <person name="Lapidus A."/>
            <person name="Glavina del Rio T."/>
            <person name="Dalin E."/>
            <person name="Tice H."/>
            <person name="Bruce D."/>
            <person name="Goodwin L."/>
            <person name="Pitluck S."/>
            <person name="Chertkov O."/>
            <person name="Brettin T."/>
            <person name="Detter J.C."/>
            <person name="Han C."/>
            <person name="Larimer F."/>
            <person name="Land M."/>
            <person name="Hauser L."/>
            <person name="Kyrpides N."/>
            <person name="Mikhailova N."/>
            <person name="Brumm P."/>
            <person name="Mead D.A."/>
            <person name="Richardson P."/>
        </authorList>
    </citation>
    <scope>NUCLEOTIDE SEQUENCE [LARGE SCALE GENOMIC DNA]</scope>
    <source>
        <strain>WCH70</strain>
    </source>
</reference>
<gene>
    <name evidence="1" type="primary">mscL</name>
    <name type="ordered locus">GWCH70_1285</name>
</gene>
<organism>
    <name type="scientific">Geobacillus sp. (strain WCH70)</name>
    <dbReference type="NCBI Taxonomy" id="471223"/>
    <lineage>
        <taxon>Bacteria</taxon>
        <taxon>Bacillati</taxon>
        <taxon>Bacillota</taxon>
        <taxon>Bacilli</taxon>
        <taxon>Bacillales</taxon>
        <taxon>Anoxybacillaceae</taxon>
        <taxon>Geobacillus</taxon>
    </lineage>
</organism>
<accession>C5DA22</accession>
<proteinExistence type="inferred from homology"/>
<name>MSCL_GEOSW</name>